<reference key="1">
    <citation type="journal article" date="2010" name="PLoS Genet.">
        <title>Genome sequence of the plant growth promoting endophytic bacterium Enterobacter sp. 638.</title>
        <authorList>
            <person name="Taghavi S."/>
            <person name="van der Lelie D."/>
            <person name="Hoffman A."/>
            <person name="Zhang Y.B."/>
            <person name="Walla M.D."/>
            <person name="Vangronsveld J."/>
            <person name="Newman L."/>
            <person name="Monchy S."/>
        </authorList>
    </citation>
    <scope>NUCLEOTIDE SEQUENCE [LARGE SCALE GENOMIC DNA]</scope>
    <source>
        <strain>638</strain>
    </source>
</reference>
<accession>A4WDW7</accession>
<protein>
    <recommendedName>
        <fullName evidence="1">Enolase</fullName>
        <ecNumber evidence="1">4.2.1.11</ecNumber>
    </recommendedName>
    <alternativeName>
        <fullName evidence="1">2-phospho-D-glycerate hydro-lyase</fullName>
    </alternativeName>
    <alternativeName>
        <fullName evidence="1">2-phosphoglycerate dehydratase</fullName>
    </alternativeName>
</protein>
<organism>
    <name type="scientific">Enterobacter sp. (strain 638)</name>
    <dbReference type="NCBI Taxonomy" id="399742"/>
    <lineage>
        <taxon>Bacteria</taxon>
        <taxon>Pseudomonadati</taxon>
        <taxon>Pseudomonadota</taxon>
        <taxon>Gammaproteobacteria</taxon>
        <taxon>Enterobacterales</taxon>
        <taxon>Enterobacteriaceae</taxon>
        <taxon>Enterobacter</taxon>
    </lineage>
</organism>
<dbReference type="EC" id="4.2.1.11" evidence="1"/>
<dbReference type="EMBL" id="CP000653">
    <property type="protein sequence ID" value="ABP61897.1"/>
    <property type="molecule type" value="Genomic_DNA"/>
</dbReference>
<dbReference type="RefSeq" id="WP_015960226.1">
    <property type="nucleotide sequence ID" value="NC_009436.1"/>
</dbReference>
<dbReference type="SMR" id="A4WDW7"/>
<dbReference type="STRING" id="399742.Ent638_3233"/>
<dbReference type="KEGG" id="ent:Ent638_3233"/>
<dbReference type="eggNOG" id="COG0148">
    <property type="taxonomic scope" value="Bacteria"/>
</dbReference>
<dbReference type="HOGENOM" id="CLU_031223_2_1_6"/>
<dbReference type="OrthoDB" id="9804716at2"/>
<dbReference type="UniPathway" id="UPA00109">
    <property type="reaction ID" value="UER00187"/>
</dbReference>
<dbReference type="Proteomes" id="UP000000230">
    <property type="component" value="Chromosome"/>
</dbReference>
<dbReference type="GO" id="GO:0009986">
    <property type="term" value="C:cell surface"/>
    <property type="evidence" value="ECO:0007669"/>
    <property type="project" value="UniProtKB-SubCell"/>
</dbReference>
<dbReference type="GO" id="GO:0005576">
    <property type="term" value="C:extracellular region"/>
    <property type="evidence" value="ECO:0007669"/>
    <property type="project" value="UniProtKB-SubCell"/>
</dbReference>
<dbReference type="GO" id="GO:0000015">
    <property type="term" value="C:phosphopyruvate hydratase complex"/>
    <property type="evidence" value="ECO:0007669"/>
    <property type="project" value="InterPro"/>
</dbReference>
<dbReference type="GO" id="GO:0000287">
    <property type="term" value="F:magnesium ion binding"/>
    <property type="evidence" value="ECO:0007669"/>
    <property type="project" value="UniProtKB-UniRule"/>
</dbReference>
<dbReference type="GO" id="GO:0004634">
    <property type="term" value="F:phosphopyruvate hydratase activity"/>
    <property type="evidence" value="ECO:0007669"/>
    <property type="project" value="UniProtKB-UniRule"/>
</dbReference>
<dbReference type="GO" id="GO:0006096">
    <property type="term" value="P:glycolytic process"/>
    <property type="evidence" value="ECO:0007669"/>
    <property type="project" value="UniProtKB-UniRule"/>
</dbReference>
<dbReference type="CDD" id="cd03313">
    <property type="entry name" value="enolase"/>
    <property type="match status" value="1"/>
</dbReference>
<dbReference type="FunFam" id="3.20.20.120:FF:000001">
    <property type="entry name" value="Enolase"/>
    <property type="match status" value="1"/>
</dbReference>
<dbReference type="FunFam" id="3.30.390.10:FF:000001">
    <property type="entry name" value="Enolase"/>
    <property type="match status" value="1"/>
</dbReference>
<dbReference type="Gene3D" id="3.20.20.120">
    <property type="entry name" value="Enolase-like C-terminal domain"/>
    <property type="match status" value="1"/>
</dbReference>
<dbReference type="Gene3D" id="3.30.390.10">
    <property type="entry name" value="Enolase-like, N-terminal domain"/>
    <property type="match status" value="1"/>
</dbReference>
<dbReference type="HAMAP" id="MF_00318">
    <property type="entry name" value="Enolase"/>
    <property type="match status" value="1"/>
</dbReference>
<dbReference type="InterPro" id="IPR000941">
    <property type="entry name" value="Enolase"/>
</dbReference>
<dbReference type="InterPro" id="IPR036849">
    <property type="entry name" value="Enolase-like_C_sf"/>
</dbReference>
<dbReference type="InterPro" id="IPR029017">
    <property type="entry name" value="Enolase-like_N"/>
</dbReference>
<dbReference type="InterPro" id="IPR020810">
    <property type="entry name" value="Enolase_C"/>
</dbReference>
<dbReference type="InterPro" id="IPR020809">
    <property type="entry name" value="Enolase_CS"/>
</dbReference>
<dbReference type="InterPro" id="IPR020811">
    <property type="entry name" value="Enolase_N"/>
</dbReference>
<dbReference type="NCBIfam" id="TIGR01060">
    <property type="entry name" value="eno"/>
    <property type="match status" value="1"/>
</dbReference>
<dbReference type="PANTHER" id="PTHR11902">
    <property type="entry name" value="ENOLASE"/>
    <property type="match status" value="1"/>
</dbReference>
<dbReference type="PANTHER" id="PTHR11902:SF1">
    <property type="entry name" value="ENOLASE"/>
    <property type="match status" value="1"/>
</dbReference>
<dbReference type="Pfam" id="PF00113">
    <property type="entry name" value="Enolase_C"/>
    <property type="match status" value="1"/>
</dbReference>
<dbReference type="Pfam" id="PF03952">
    <property type="entry name" value="Enolase_N"/>
    <property type="match status" value="1"/>
</dbReference>
<dbReference type="PIRSF" id="PIRSF001400">
    <property type="entry name" value="Enolase"/>
    <property type="match status" value="1"/>
</dbReference>
<dbReference type="PRINTS" id="PR00148">
    <property type="entry name" value="ENOLASE"/>
</dbReference>
<dbReference type="SFLD" id="SFLDF00002">
    <property type="entry name" value="enolase"/>
    <property type="match status" value="1"/>
</dbReference>
<dbReference type="SFLD" id="SFLDG00178">
    <property type="entry name" value="enolase"/>
    <property type="match status" value="1"/>
</dbReference>
<dbReference type="SMART" id="SM01192">
    <property type="entry name" value="Enolase_C"/>
    <property type="match status" value="1"/>
</dbReference>
<dbReference type="SMART" id="SM01193">
    <property type="entry name" value="Enolase_N"/>
    <property type="match status" value="1"/>
</dbReference>
<dbReference type="SUPFAM" id="SSF51604">
    <property type="entry name" value="Enolase C-terminal domain-like"/>
    <property type="match status" value="1"/>
</dbReference>
<dbReference type="SUPFAM" id="SSF54826">
    <property type="entry name" value="Enolase N-terminal domain-like"/>
    <property type="match status" value="1"/>
</dbReference>
<dbReference type="PROSITE" id="PS00164">
    <property type="entry name" value="ENOLASE"/>
    <property type="match status" value="1"/>
</dbReference>
<evidence type="ECO:0000255" key="1">
    <source>
        <dbReference type="HAMAP-Rule" id="MF_00318"/>
    </source>
</evidence>
<comment type="function">
    <text evidence="1">Catalyzes the reversible conversion of 2-phosphoglycerate (2-PG) into phosphoenolpyruvate (PEP). It is essential for the degradation of carbohydrates via glycolysis.</text>
</comment>
<comment type="catalytic activity">
    <reaction evidence="1">
        <text>(2R)-2-phosphoglycerate = phosphoenolpyruvate + H2O</text>
        <dbReference type="Rhea" id="RHEA:10164"/>
        <dbReference type="ChEBI" id="CHEBI:15377"/>
        <dbReference type="ChEBI" id="CHEBI:58289"/>
        <dbReference type="ChEBI" id="CHEBI:58702"/>
        <dbReference type="EC" id="4.2.1.11"/>
    </reaction>
</comment>
<comment type="cofactor">
    <cofactor evidence="1">
        <name>Mg(2+)</name>
        <dbReference type="ChEBI" id="CHEBI:18420"/>
    </cofactor>
    <text evidence="1">Binds a second Mg(2+) ion via substrate during catalysis.</text>
</comment>
<comment type="pathway">
    <text evidence="1">Carbohydrate degradation; glycolysis; pyruvate from D-glyceraldehyde 3-phosphate: step 4/5.</text>
</comment>
<comment type="subunit">
    <text evidence="1">Component of the RNA degradosome, a multiprotein complex involved in RNA processing and mRNA degradation.</text>
</comment>
<comment type="subcellular location">
    <subcellularLocation>
        <location evidence="1">Cytoplasm</location>
    </subcellularLocation>
    <subcellularLocation>
        <location evidence="1">Secreted</location>
    </subcellularLocation>
    <subcellularLocation>
        <location evidence="1">Cell surface</location>
    </subcellularLocation>
    <text evidence="1">Fractions of enolase are present in both the cytoplasm and on the cell surface.</text>
</comment>
<comment type="similarity">
    <text evidence="1">Belongs to the enolase family.</text>
</comment>
<keyword id="KW-0963">Cytoplasm</keyword>
<keyword id="KW-0324">Glycolysis</keyword>
<keyword id="KW-0456">Lyase</keyword>
<keyword id="KW-0460">Magnesium</keyword>
<keyword id="KW-0479">Metal-binding</keyword>
<keyword id="KW-0964">Secreted</keyword>
<name>ENO_ENT38</name>
<proteinExistence type="inferred from homology"/>
<feature type="chain" id="PRO_1000059459" description="Enolase">
    <location>
        <begin position="1"/>
        <end position="431"/>
    </location>
</feature>
<feature type="active site" description="Proton donor" evidence="1">
    <location>
        <position position="209"/>
    </location>
</feature>
<feature type="active site" description="Proton acceptor" evidence="1">
    <location>
        <position position="342"/>
    </location>
</feature>
<feature type="binding site" evidence="1">
    <location>
        <position position="167"/>
    </location>
    <ligand>
        <name>(2R)-2-phosphoglycerate</name>
        <dbReference type="ChEBI" id="CHEBI:58289"/>
    </ligand>
</feature>
<feature type="binding site" evidence="1">
    <location>
        <position position="246"/>
    </location>
    <ligand>
        <name>Mg(2+)</name>
        <dbReference type="ChEBI" id="CHEBI:18420"/>
    </ligand>
</feature>
<feature type="binding site" evidence="1">
    <location>
        <position position="290"/>
    </location>
    <ligand>
        <name>Mg(2+)</name>
        <dbReference type="ChEBI" id="CHEBI:18420"/>
    </ligand>
</feature>
<feature type="binding site" evidence="1">
    <location>
        <position position="317"/>
    </location>
    <ligand>
        <name>Mg(2+)</name>
        <dbReference type="ChEBI" id="CHEBI:18420"/>
    </ligand>
</feature>
<feature type="binding site" evidence="1">
    <location>
        <position position="342"/>
    </location>
    <ligand>
        <name>(2R)-2-phosphoglycerate</name>
        <dbReference type="ChEBI" id="CHEBI:58289"/>
    </ligand>
</feature>
<feature type="binding site" evidence="1">
    <location>
        <position position="371"/>
    </location>
    <ligand>
        <name>(2R)-2-phosphoglycerate</name>
        <dbReference type="ChEBI" id="CHEBI:58289"/>
    </ligand>
</feature>
<feature type="binding site" evidence="1">
    <location>
        <position position="372"/>
    </location>
    <ligand>
        <name>(2R)-2-phosphoglycerate</name>
        <dbReference type="ChEBI" id="CHEBI:58289"/>
    </ligand>
</feature>
<feature type="binding site" evidence="1">
    <location>
        <position position="393"/>
    </location>
    <ligand>
        <name>(2R)-2-phosphoglycerate</name>
        <dbReference type="ChEBI" id="CHEBI:58289"/>
    </ligand>
</feature>
<gene>
    <name evidence="1" type="primary">eno</name>
    <name type="ordered locus">Ent638_3233</name>
</gene>
<sequence>MSKIVKVIGREIIDSRGNPTVEAEVHLEGGFVGMAAAPSGASTGSREALELRDGDKSRYMGKGVLKAVGAVNGPIAQAVLGKDAKDQAGIDKIMIDLDGTENKSNFGANAILAVSLATAKAAAASKGQALFEHIAELNGTPGKYSMPVPMMNIINGGEHADNNVDIQEFMIQPVGAKSLKEAVRMGSEVFHNLAKVLKAKGMNTAVGDEGGYAPNLGSNAEALAVIAEAVKAAGYELGTDITLAMDCAASEFYKDGKYVLAGEGNKAFTSEEFTHFLEDLTKQYPIVSIEDGLDESDWDGFAYQTKVLGDKIQLVGDDLFVTNTKILKEGIDKGIVNSILIKFNQIGSLTETLAAIKMAKDAGYTAVISHRSGETEDATIADLAVGTAAGQIKTGSMSRSDRVAKYNQLIRIEEALGEKAPYNGRKEIKGQ</sequence>